<gene>
    <name evidence="1" type="primary">chdC</name>
    <name type="ordered locus">SSP2125</name>
</gene>
<feature type="chain" id="PRO_0000294057" description="Coproheme decarboxylase">
    <location>
        <begin position="1"/>
        <end position="249"/>
    </location>
</feature>
<feature type="active site" evidence="1">
    <location>
        <position position="145"/>
    </location>
</feature>
<feature type="binding site" evidence="1">
    <location>
        <position position="131"/>
    </location>
    <ligand>
        <name>Fe-coproporphyrin III</name>
        <dbReference type="ChEBI" id="CHEBI:68438"/>
    </ligand>
</feature>
<feature type="binding site" evidence="1">
    <location>
        <begin position="145"/>
        <end position="149"/>
    </location>
    <ligand>
        <name>Fe-coproporphyrin III</name>
        <dbReference type="ChEBI" id="CHEBI:68438"/>
    </ligand>
</feature>
<feature type="binding site" description="axial binding residue" evidence="1">
    <location>
        <position position="172"/>
    </location>
    <ligand>
        <name>Fe-coproporphyrin III</name>
        <dbReference type="ChEBI" id="CHEBI:68438"/>
    </ligand>
    <ligandPart>
        <name>Fe</name>
        <dbReference type="ChEBI" id="CHEBI:18248"/>
    </ligandPart>
</feature>
<feature type="binding site" evidence="1">
    <location>
        <position position="185"/>
    </location>
    <ligand>
        <name>Fe-coproporphyrin III</name>
        <dbReference type="ChEBI" id="CHEBI:68438"/>
    </ligand>
</feature>
<comment type="function">
    <text evidence="1">Involved in coproporphyrin-dependent heme b biosynthesis. Catalyzes the decarboxylation of Fe-coproporphyrin III (coproheme) to heme b (protoheme IX), the last step of the pathway. The reaction occurs in a stepwise manner with a three-propionate intermediate.</text>
</comment>
<comment type="catalytic activity">
    <reaction evidence="1">
        <text>Fe-coproporphyrin III + 2 H2O2 + 2 H(+) = heme b + 2 CO2 + 4 H2O</text>
        <dbReference type="Rhea" id="RHEA:56516"/>
        <dbReference type="ChEBI" id="CHEBI:15377"/>
        <dbReference type="ChEBI" id="CHEBI:15378"/>
        <dbReference type="ChEBI" id="CHEBI:16240"/>
        <dbReference type="ChEBI" id="CHEBI:16526"/>
        <dbReference type="ChEBI" id="CHEBI:60344"/>
        <dbReference type="ChEBI" id="CHEBI:68438"/>
        <dbReference type="EC" id="1.3.98.5"/>
    </reaction>
    <physiologicalReaction direction="left-to-right" evidence="1">
        <dbReference type="Rhea" id="RHEA:56517"/>
    </physiologicalReaction>
</comment>
<comment type="catalytic activity">
    <reaction evidence="1">
        <text>Fe-coproporphyrin III + H2O2 + H(+) = harderoheme III + CO2 + 2 H2O</text>
        <dbReference type="Rhea" id="RHEA:57940"/>
        <dbReference type="ChEBI" id="CHEBI:15377"/>
        <dbReference type="ChEBI" id="CHEBI:15378"/>
        <dbReference type="ChEBI" id="CHEBI:16240"/>
        <dbReference type="ChEBI" id="CHEBI:16526"/>
        <dbReference type="ChEBI" id="CHEBI:68438"/>
        <dbReference type="ChEBI" id="CHEBI:142463"/>
    </reaction>
    <physiologicalReaction direction="left-to-right" evidence="1">
        <dbReference type="Rhea" id="RHEA:57941"/>
    </physiologicalReaction>
</comment>
<comment type="catalytic activity">
    <reaction evidence="1">
        <text>harderoheme III + H2O2 + H(+) = heme b + CO2 + 2 H2O</text>
        <dbReference type="Rhea" id="RHEA:57944"/>
        <dbReference type="ChEBI" id="CHEBI:15377"/>
        <dbReference type="ChEBI" id="CHEBI:15378"/>
        <dbReference type="ChEBI" id="CHEBI:16240"/>
        <dbReference type="ChEBI" id="CHEBI:16526"/>
        <dbReference type="ChEBI" id="CHEBI:60344"/>
        <dbReference type="ChEBI" id="CHEBI:142463"/>
    </reaction>
    <physiologicalReaction direction="left-to-right" evidence="1">
        <dbReference type="Rhea" id="RHEA:57945"/>
    </physiologicalReaction>
</comment>
<comment type="cofactor">
    <cofactor evidence="1">
        <name>Fe-coproporphyrin III</name>
        <dbReference type="ChEBI" id="CHEBI:68438"/>
    </cofactor>
    <text evidence="1">Fe-coproporphyrin III acts both as a substrate and a redox cofactor.</text>
</comment>
<comment type="pathway">
    <text evidence="1">Porphyrin-containing compound metabolism; protoheme biosynthesis.</text>
</comment>
<comment type="similarity">
    <text evidence="1">Belongs to the ChdC family. Type 1 subfamily.</text>
</comment>
<accession>Q49VE0</accession>
<reference key="1">
    <citation type="journal article" date="2005" name="Proc. Natl. Acad. Sci. U.S.A.">
        <title>Whole genome sequence of Staphylococcus saprophyticus reveals the pathogenesis of uncomplicated urinary tract infection.</title>
        <authorList>
            <person name="Kuroda M."/>
            <person name="Yamashita A."/>
            <person name="Hirakawa H."/>
            <person name="Kumano M."/>
            <person name="Morikawa K."/>
            <person name="Higashide M."/>
            <person name="Maruyama A."/>
            <person name="Inose Y."/>
            <person name="Matoba K."/>
            <person name="Toh H."/>
            <person name="Kuhara S."/>
            <person name="Hattori M."/>
            <person name="Ohta T."/>
        </authorList>
    </citation>
    <scope>NUCLEOTIDE SEQUENCE [LARGE SCALE GENOMIC DNA]</scope>
    <source>
        <strain>ATCC 15305 / DSM 20229 / NCIMB 8711 / NCTC 7292 / S-41</strain>
    </source>
</reference>
<sequence>MPQAPETLDGWYSLHLLYAIDWSSLRLVPTEERQTIVDELQTFLNKHEEARTNHVGDHAFYNITGQKADILLWALRPEMKDLNAFENEFNKLKIADFLIPTYSYVSIIELGNYLAGKSDEDPYENPHIKPRLFPELPQSEYICFYPMDKRRNETYNWYMLPLEKRQELMYAHGKIGRQYAGKIKQFITGSVGFDDFEWGVTLFADDPLQFKKIVYEMRFDETTARYGDFGSFYVGHIVTKDNLQDLFAL</sequence>
<name>CHDC_STAS1</name>
<evidence type="ECO:0000255" key="1">
    <source>
        <dbReference type="HAMAP-Rule" id="MF_01442"/>
    </source>
</evidence>
<keyword id="KW-0349">Heme</keyword>
<keyword id="KW-0350">Heme biosynthesis</keyword>
<keyword id="KW-0408">Iron</keyword>
<keyword id="KW-0479">Metal-binding</keyword>
<keyword id="KW-0560">Oxidoreductase</keyword>
<keyword id="KW-1185">Reference proteome</keyword>
<protein>
    <recommendedName>
        <fullName evidence="1">Coproheme decarboxylase</fullName>
        <ecNumber evidence="1">1.3.98.5</ecNumber>
    </recommendedName>
    <alternativeName>
        <fullName evidence="1">Coproheme III oxidative decarboxylase</fullName>
    </alternativeName>
    <alternativeName>
        <fullName evidence="1">Hydrogen peroxide-dependent heme synthase</fullName>
    </alternativeName>
</protein>
<proteinExistence type="inferred from homology"/>
<dbReference type="EC" id="1.3.98.5" evidence="1"/>
<dbReference type="EMBL" id="AP008934">
    <property type="protein sequence ID" value="BAE19270.1"/>
    <property type="molecule type" value="Genomic_DNA"/>
</dbReference>
<dbReference type="SMR" id="Q49VE0"/>
<dbReference type="KEGG" id="ssp:SSP2125"/>
<dbReference type="eggNOG" id="COG3253">
    <property type="taxonomic scope" value="Bacteria"/>
</dbReference>
<dbReference type="HOGENOM" id="CLU_063226_1_0_9"/>
<dbReference type="OrthoDB" id="9773646at2"/>
<dbReference type="UniPathway" id="UPA00252"/>
<dbReference type="Proteomes" id="UP000006371">
    <property type="component" value="Chromosome"/>
</dbReference>
<dbReference type="GO" id="GO:0020037">
    <property type="term" value="F:heme binding"/>
    <property type="evidence" value="ECO:0007669"/>
    <property type="project" value="InterPro"/>
</dbReference>
<dbReference type="GO" id="GO:0046872">
    <property type="term" value="F:metal ion binding"/>
    <property type="evidence" value="ECO:0007669"/>
    <property type="project" value="UniProtKB-KW"/>
</dbReference>
<dbReference type="GO" id="GO:0016634">
    <property type="term" value="F:oxidoreductase activity, acting on the CH-CH group of donors, oxygen as acceptor"/>
    <property type="evidence" value="ECO:0007669"/>
    <property type="project" value="UniProtKB-UniRule"/>
</dbReference>
<dbReference type="GO" id="GO:0004601">
    <property type="term" value="F:peroxidase activity"/>
    <property type="evidence" value="ECO:0007669"/>
    <property type="project" value="InterPro"/>
</dbReference>
<dbReference type="GO" id="GO:0006785">
    <property type="term" value="P:heme B biosynthetic process"/>
    <property type="evidence" value="ECO:0007669"/>
    <property type="project" value="UniProtKB-UniRule"/>
</dbReference>
<dbReference type="Gene3D" id="3.30.70.1030">
    <property type="entry name" value="Apc35880, domain 1"/>
    <property type="match status" value="2"/>
</dbReference>
<dbReference type="HAMAP" id="MF_01442">
    <property type="entry name" value="Coproheme_decarbox_1"/>
    <property type="match status" value="1"/>
</dbReference>
<dbReference type="InterPro" id="IPR031332">
    <property type="entry name" value="CHDC"/>
</dbReference>
<dbReference type="InterPro" id="IPR010644">
    <property type="entry name" value="ChdC/CLD"/>
</dbReference>
<dbReference type="InterPro" id="IPR011008">
    <property type="entry name" value="Dimeric_a/b-barrel"/>
</dbReference>
<dbReference type="NCBIfam" id="NF008913">
    <property type="entry name" value="PRK12276.1"/>
    <property type="match status" value="1"/>
</dbReference>
<dbReference type="PANTHER" id="PTHR36843:SF1">
    <property type="entry name" value="COPROHEME DECARBOXYLASE"/>
    <property type="match status" value="1"/>
</dbReference>
<dbReference type="PANTHER" id="PTHR36843">
    <property type="entry name" value="HEME-DEPENDENT PEROXIDASE YWFI-RELATED"/>
    <property type="match status" value="1"/>
</dbReference>
<dbReference type="Pfam" id="PF06778">
    <property type="entry name" value="Chlor_dismutase"/>
    <property type="match status" value="1"/>
</dbReference>
<dbReference type="SUPFAM" id="SSF54909">
    <property type="entry name" value="Dimeric alpha+beta barrel"/>
    <property type="match status" value="1"/>
</dbReference>
<organism>
    <name type="scientific">Staphylococcus saprophyticus subsp. saprophyticus (strain ATCC 15305 / DSM 20229 / NCIMB 8711 / NCTC 7292 / S-41)</name>
    <dbReference type="NCBI Taxonomy" id="342451"/>
    <lineage>
        <taxon>Bacteria</taxon>
        <taxon>Bacillati</taxon>
        <taxon>Bacillota</taxon>
        <taxon>Bacilli</taxon>
        <taxon>Bacillales</taxon>
        <taxon>Staphylococcaceae</taxon>
        <taxon>Staphylococcus</taxon>
    </lineage>
</organism>